<organism>
    <name type="scientific">Drosophila melanogaster</name>
    <name type="common">Fruit fly</name>
    <dbReference type="NCBI Taxonomy" id="7227"/>
    <lineage>
        <taxon>Eukaryota</taxon>
        <taxon>Metazoa</taxon>
        <taxon>Ecdysozoa</taxon>
        <taxon>Arthropoda</taxon>
        <taxon>Hexapoda</taxon>
        <taxon>Insecta</taxon>
        <taxon>Pterygota</taxon>
        <taxon>Neoptera</taxon>
        <taxon>Endopterygota</taxon>
        <taxon>Diptera</taxon>
        <taxon>Brachycera</taxon>
        <taxon>Muscomorpha</taxon>
        <taxon>Ephydroidea</taxon>
        <taxon>Drosophilidae</taxon>
        <taxon>Drosophila</taxon>
        <taxon>Sophophora</taxon>
    </lineage>
</organism>
<reference key="1">
    <citation type="journal article" date="2000" name="Science">
        <title>The genome sequence of Drosophila melanogaster.</title>
        <authorList>
            <person name="Adams M.D."/>
            <person name="Celniker S.E."/>
            <person name="Holt R.A."/>
            <person name="Evans C.A."/>
            <person name="Gocayne J.D."/>
            <person name="Amanatides P.G."/>
            <person name="Scherer S.E."/>
            <person name="Li P.W."/>
            <person name="Hoskins R.A."/>
            <person name="Galle R.F."/>
            <person name="George R.A."/>
            <person name="Lewis S.E."/>
            <person name="Richards S."/>
            <person name="Ashburner M."/>
            <person name="Henderson S.N."/>
            <person name="Sutton G.G."/>
            <person name="Wortman J.R."/>
            <person name="Yandell M.D."/>
            <person name="Zhang Q."/>
            <person name="Chen L.X."/>
            <person name="Brandon R.C."/>
            <person name="Rogers Y.-H.C."/>
            <person name="Blazej R.G."/>
            <person name="Champe M."/>
            <person name="Pfeiffer B.D."/>
            <person name="Wan K.H."/>
            <person name="Doyle C."/>
            <person name="Baxter E.G."/>
            <person name="Helt G."/>
            <person name="Nelson C.R."/>
            <person name="Miklos G.L.G."/>
            <person name="Abril J.F."/>
            <person name="Agbayani A."/>
            <person name="An H.-J."/>
            <person name="Andrews-Pfannkoch C."/>
            <person name="Baldwin D."/>
            <person name="Ballew R.M."/>
            <person name="Basu A."/>
            <person name="Baxendale J."/>
            <person name="Bayraktaroglu L."/>
            <person name="Beasley E.M."/>
            <person name="Beeson K.Y."/>
            <person name="Benos P.V."/>
            <person name="Berman B.P."/>
            <person name="Bhandari D."/>
            <person name="Bolshakov S."/>
            <person name="Borkova D."/>
            <person name="Botchan M.R."/>
            <person name="Bouck J."/>
            <person name="Brokstein P."/>
            <person name="Brottier P."/>
            <person name="Burtis K.C."/>
            <person name="Busam D.A."/>
            <person name="Butler H."/>
            <person name="Cadieu E."/>
            <person name="Center A."/>
            <person name="Chandra I."/>
            <person name="Cherry J.M."/>
            <person name="Cawley S."/>
            <person name="Dahlke C."/>
            <person name="Davenport L.B."/>
            <person name="Davies P."/>
            <person name="de Pablos B."/>
            <person name="Delcher A."/>
            <person name="Deng Z."/>
            <person name="Mays A.D."/>
            <person name="Dew I."/>
            <person name="Dietz S.M."/>
            <person name="Dodson K."/>
            <person name="Doup L.E."/>
            <person name="Downes M."/>
            <person name="Dugan-Rocha S."/>
            <person name="Dunkov B.C."/>
            <person name="Dunn P."/>
            <person name="Durbin K.J."/>
            <person name="Evangelista C.C."/>
            <person name="Ferraz C."/>
            <person name="Ferriera S."/>
            <person name="Fleischmann W."/>
            <person name="Fosler C."/>
            <person name="Gabrielian A.E."/>
            <person name="Garg N.S."/>
            <person name="Gelbart W.M."/>
            <person name="Glasser K."/>
            <person name="Glodek A."/>
            <person name="Gong F."/>
            <person name="Gorrell J.H."/>
            <person name="Gu Z."/>
            <person name="Guan P."/>
            <person name="Harris M."/>
            <person name="Harris N.L."/>
            <person name="Harvey D.A."/>
            <person name="Heiman T.J."/>
            <person name="Hernandez J.R."/>
            <person name="Houck J."/>
            <person name="Hostin D."/>
            <person name="Houston K.A."/>
            <person name="Howland T.J."/>
            <person name="Wei M.-H."/>
            <person name="Ibegwam C."/>
            <person name="Jalali M."/>
            <person name="Kalush F."/>
            <person name="Karpen G.H."/>
            <person name="Ke Z."/>
            <person name="Kennison J.A."/>
            <person name="Ketchum K.A."/>
            <person name="Kimmel B.E."/>
            <person name="Kodira C.D."/>
            <person name="Kraft C.L."/>
            <person name="Kravitz S."/>
            <person name="Kulp D."/>
            <person name="Lai Z."/>
            <person name="Lasko P."/>
            <person name="Lei Y."/>
            <person name="Levitsky A.A."/>
            <person name="Li J.H."/>
            <person name="Li Z."/>
            <person name="Liang Y."/>
            <person name="Lin X."/>
            <person name="Liu X."/>
            <person name="Mattei B."/>
            <person name="McIntosh T.C."/>
            <person name="McLeod M.P."/>
            <person name="McPherson D."/>
            <person name="Merkulov G."/>
            <person name="Milshina N.V."/>
            <person name="Mobarry C."/>
            <person name="Morris J."/>
            <person name="Moshrefi A."/>
            <person name="Mount S.M."/>
            <person name="Moy M."/>
            <person name="Murphy B."/>
            <person name="Murphy L."/>
            <person name="Muzny D.M."/>
            <person name="Nelson D.L."/>
            <person name="Nelson D.R."/>
            <person name="Nelson K.A."/>
            <person name="Nixon K."/>
            <person name="Nusskern D.R."/>
            <person name="Pacleb J.M."/>
            <person name="Palazzolo M."/>
            <person name="Pittman G.S."/>
            <person name="Pan S."/>
            <person name="Pollard J."/>
            <person name="Puri V."/>
            <person name="Reese M.G."/>
            <person name="Reinert K."/>
            <person name="Remington K."/>
            <person name="Saunders R.D.C."/>
            <person name="Scheeler F."/>
            <person name="Shen H."/>
            <person name="Shue B.C."/>
            <person name="Siden-Kiamos I."/>
            <person name="Simpson M."/>
            <person name="Skupski M.P."/>
            <person name="Smith T.J."/>
            <person name="Spier E."/>
            <person name="Spradling A.C."/>
            <person name="Stapleton M."/>
            <person name="Strong R."/>
            <person name="Sun E."/>
            <person name="Svirskas R."/>
            <person name="Tector C."/>
            <person name="Turner R."/>
            <person name="Venter E."/>
            <person name="Wang A.H."/>
            <person name="Wang X."/>
            <person name="Wang Z.-Y."/>
            <person name="Wassarman D.A."/>
            <person name="Weinstock G.M."/>
            <person name="Weissenbach J."/>
            <person name="Williams S.M."/>
            <person name="Woodage T."/>
            <person name="Worley K.C."/>
            <person name="Wu D."/>
            <person name="Yang S."/>
            <person name="Yao Q.A."/>
            <person name="Ye J."/>
            <person name="Yeh R.-F."/>
            <person name="Zaveri J.S."/>
            <person name="Zhan M."/>
            <person name="Zhang G."/>
            <person name="Zhao Q."/>
            <person name="Zheng L."/>
            <person name="Zheng X.H."/>
            <person name="Zhong F.N."/>
            <person name="Zhong W."/>
            <person name="Zhou X."/>
            <person name="Zhu S.C."/>
            <person name="Zhu X."/>
            <person name="Smith H.O."/>
            <person name="Gibbs R.A."/>
            <person name="Myers E.W."/>
            <person name="Rubin G.M."/>
            <person name="Venter J.C."/>
        </authorList>
    </citation>
    <scope>NUCLEOTIDE SEQUENCE [LARGE SCALE GENOMIC DNA]</scope>
    <source>
        <strain>Berkeley</strain>
    </source>
</reference>
<reference key="2">
    <citation type="journal article" date="2002" name="Genome Biol.">
        <title>Annotation of the Drosophila melanogaster euchromatic genome: a systematic review.</title>
        <authorList>
            <person name="Misra S."/>
            <person name="Crosby M.A."/>
            <person name="Mungall C.J."/>
            <person name="Matthews B.B."/>
            <person name="Campbell K.S."/>
            <person name="Hradecky P."/>
            <person name="Huang Y."/>
            <person name="Kaminker J.S."/>
            <person name="Millburn G.H."/>
            <person name="Prochnik S.E."/>
            <person name="Smith C.D."/>
            <person name="Tupy J.L."/>
            <person name="Whitfield E.J."/>
            <person name="Bayraktaroglu L."/>
            <person name="Berman B.P."/>
            <person name="Bettencourt B.R."/>
            <person name="Celniker S.E."/>
            <person name="de Grey A.D.N.J."/>
            <person name="Drysdale R.A."/>
            <person name="Harris N.L."/>
            <person name="Richter J."/>
            <person name="Russo S."/>
            <person name="Schroeder A.J."/>
            <person name="Shu S.Q."/>
            <person name="Stapleton M."/>
            <person name="Yamada C."/>
            <person name="Ashburner M."/>
            <person name="Gelbart W.M."/>
            <person name="Rubin G.M."/>
            <person name="Lewis S.E."/>
        </authorList>
    </citation>
    <scope>GENOME REANNOTATION</scope>
    <scope>ALTERNATIVE SPLICING</scope>
    <source>
        <strain>Berkeley</strain>
    </source>
</reference>
<reference key="3">
    <citation type="journal article" date="2002" name="Genome Biol.">
        <title>A Drosophila full-length cDNA resource.</title>
        <authorList>
            <person name="Stapleton M."/>
            <person name="Carlson J.W."/>
            <person name="Brokstein P."/>
            <person name="Yu C."/>
            <person name="Champe M."/>
            <person name="George R.A."/>
            <person name="Guarin H."/>
            <person name="Kronmiller B."/>
            <person name="Pacleb J.M."/>
            <person name="Park S."/>
            <person name="Wan K.H."/>
            <person name="Rubin G.M."/>
            <person name="Celniker S.E."/>
        </authorList>
    </citation>
    <scope>NUCLEOTIDE SEQUENCE [LARGE SCALE MRNA] (ISOFORM 1)</scope>
    <source>
        <strain>Berkeley</strain>
        <tissue>Testis</tissue>
    </source>
</reference>
<proteinExistence type="evidence at transcript level"/>
<protein>
    <recommendedName>
        <fullName>Metallophosphoesterase 1 homolog</fullName>
        <ecNumber>3.1.-.-</ecNumber>
    </recommendedName>
    <alternativeName>
        <fullName>Post-GPI attachment to proteins 5 ortholog</fullName>
    </alternativeName>
</protein>
<gene>
    <name type="primary">PGAP5</name>
    <name type="ORF">CG8455</name>
</gene>
<evidence type="ECO:0000250" key="1"/>
<evidence type="ECO:0000255" key="2"/>
<evidence type="ECO:0000305" key="3"/>
<dbReference type="EC" id="3.1.-.-"/>
<dbReference type="EMBL" id="AE014134">
    <property type="protein sequence ID" value="AAF52615.3"/>
    <property type="molecule type" value="Genomic_DNA"/>
</dbReference>
<dbReference type="EMBL" id="AE014134">
    <property type="protein sequence ID" value="AAN11155.1"/>
    <property type="molecule type" value="Genomic_DNA"/>
</dbReference>
<dbReference type="EMBL" id="AE014134">
    <property type="protein sequence ID" value="AGB92767.1"/>
    <property type="molecule type" value="Genomic_DNA"/>
</dbReference>
<dbReference type="EMBL" id="AY094655">
    <property type="protein sequence ID" value="AAM11008.1"/>
    <property type="molecule type" value="mRNA"/>
</dbReference>
<dbReference type="RefSeq" id="NP_001260231.1">
    <molecule id="Q9VLR9-2"/>
    <property type="nucleotide sequence ID" value="NM_001273302.1"/>
</dbReference>
<dbReference type="RefSeq" id="NP_609191.1">
    <molecule id="Q9VLR9-1"/>
    <property type="nucleotide sequence ID" value="NM_135347.3"/>
</dbReference>
<dbReference type="RefSeq" id="NP_723359.1">
    <molecule id="Q9VLR9-2"/>
    <property type="nucleotide sequence ID" value="NM_164798.3"/>
</dbReference>
<dbReference type="BioGRID" id="60245">
    <property type="interactions" value="29"/>
</dbReference>
<dbReference type="FunCoup" id="Q9VLR9">
    <property type="interactions" value="824"/>
</dbReference>
<dbReference type="IntAct" id="Q9VLR9">
    <property type="interactions" value="28"/>
</dbReference>
<dbReference type="STRING" id="7227.FBpp0079209"/>
<dbReference type="PaxDb" id="7227-FBpp0079209"/>
<dbReference type="DNASU" id="34116"/>
<dbReference type="EnsemblMetazoa" id="FBtr0079587">
    <molecule id="Q9VLR9-2"/>
    <property type="protein sequence ID" value="FBpp0079208"/>
    <property type="gene ID" value="FBgn0031997"/>
</dbReference>
<dbReference type="EnsemblMetazoa" id="FBtr0079588">
    <molecule id="Q9VLR9-1"/>
    <property type="protein sequence ID" value="FBpp0079209"/>
    <property type="gene ID" value="FBgn0031997"/>
</dbReference>
<dbReference type="EnsemblMetazoa" id="FBtr0335190">
    <molecule id="Q9VLR9-2"/>
    <property type="protein sequence ID" value="FBpp0307180"/>
    <property type="gene ID" value="FBgn0031997"/>
</dbReference>
<dbReference type="GeneID" id="34116"/>
<dbReference type="KEGG" id="dme:Dmel_CG8455"/>
<dbReference type="UCSC" id="CG8455-RA">
    <molecule id="Q9VLR9-1"/>
    <property type="organism name" value="d. melanogaster"/>
</dbReference>
<dbReference type="AGR" id="FB:FBgn0031997"/>
<dbReference type="CTD" id="34116"/>
<dbReference type="FlyBase" id="FBgn0031997">
    <property type="gene designation" value="PGAP5"/>
</dbReference>
<dbReference type="VEuPathDB" id="VectorBase:FBgn0031997"/>
<dbReference type="eggNOG" id="KOG3662">
    <property type="taxonomic scope" value="Eukaryota"/>
</dbReference>
<dbReference type="GeneTree" id="ENSGT00390000013236"/>
<dbReference type="InParanoid" id="Q9VLR9"/>
<dbReference type="OMA" id="LHCMKYP"/>
<dbReference type="OrthoDB" id="7663298at2759"/>
<dbReference type="PhylomeDB" id="Q9VLR9"/>
<dbReference type="SignaLink" id="Q9VLR9"/>
<dbReference type="BioGRID-ORCS" id="34116">
    <property type="hits" value="0 hits in 1 CRISPR screen"/>
</dbReference>
<dbReference type="GenomeRNAi" id="34116"/>
<dbReference type="PRO" id="PR:Q9VLR9"/>
<dbReference type="Proteomes" id="UP000000803">
    <property type="component" value="Chromosome 2L"/>
</dbReference>
<dbReference type="Bgee" id="FBgn0031997">
    <property type="expression patterns" value="Expressed in adult abdomen and 72 other cell types or tissues"/>
</dbReference>
<dbReference type="GO" id="GO:0005793">
    <property type="term" value="C:endoplasmic reticulum-Golgi intermediate compartment"/>
    <property type="evidence" value="ECO:0007669"/>
    <property type="project" value="InterPro"/>
</dbReference>
<dbReference type="GO" id="GO:0016020">
    <property type="term" value="C:membrane"/>
    <property type="evidence" value="ECO:0007669"/>
    <property type="project" value="UniProtKB-SubCell"/>
</dbReference>
<dbReference type="GO" id="GO:0046872">
    <property type="term" value="F:metal ion binding"/>
    <property type="evidence" value="ECO:0007669"/>
    <property type="project" value="UniProtKB-KW"/>
</dbReference>
<dbReference type="GO" id="GO:0008081">
    <property type="term" value="F:phosphoric diester hydrolase activity"/>
    <property type="evidence" value="ECO:0007669"/>
    <property type="project" value="InterPro"/>
</dbReference>
<dbReference type="GO" id="GO:0006888">
    <property type="term" value="P:endoplasmic reticulum to Golgi vesicle-mediated transport"/>
    <property type="evidence" value="ECO:0007669"/>
    <property type="project" value="InterPro"/>
</dbReference>
<dbReference type="GO" id="GO:0006506">
    <property type="term" value="P:GPI anchor biosynthetic process"/>
    <property type="evidence" value="ECO:0007669"/>
    <property type="project" value="InterPro"/>
</dbReference>
<dbReference type="CDD" id="cd08165">
    <property type="entry name" value="MPP_MPPE1"/>
    <property type="match status" value="1"/>
</dbReference>
<dbReference type="FunFam" id="3.60.21.10:FF:000081">
    <property type="entry name" value="Metallophosphoesterase 1 homolog"/>
    <property type="match status" value="1"/>
</dbReference>
<dbReference type="Gene3D" id="3.60.21.10">
    <property type="match status" value="1"/>
</dbReference>
<dbReference type="InterPro" id="IPR004843">
    <property type="entry name" value="Calcineurin-like_PHP_ApaH"/>
</dbReference>
<dbReference type="InterPro" id="IPR029052">
    <property type="entry name" value="Metallo-depent_PP-like"/>
</dbReference>
<dbReference type="InterPro" id="IPR039541">
    <property type="entry name" value="MPP_MPPE1"/>
</dbReference>
<dbReference type="InterPro" id="IPR033308">
    <property type="entry name" value="PGAP5/Cdc1/Ted1"/>
</dbReference>
<dbReference type="PANTHER" id="PTHR13315">
    <property type="entry name" value="METALLO PHOSPHOESTERASE RELATED"/>
    <property type="match status" value="1"/>
</dbReference>
<dbReference type="PANTHER" id="PTHR13315:SF0">
    <property type="entry name" value="METALLOPHOSPHOESTERASE 1"/>
    <property type="match status" value="1"/>
</dbReference>
<dbReference type="Pfam" id="PF00149">
    <property type="entry name" value="Metallophos"/>
    <property type="match status" value="1"/>
</dbReference>
<dbReference type="SUPFAM" id="SSF56300">
    <property type="entry name" value="Metallo-dependent phosphatases"/>
    <property type="match status" value="1"/>
</dbReference>
<sequence>MRFLYACFVIVLCALIFCEYVADFVVLQKCKWPEIKRKKYVDDPLRAMILADPHLLGPHRGHWLDKLYREWHMTRAFQAASRLFQPDVVFVLGDLFDEGDMVSDKQFQEYVWRYLKMFHLPPGIPLISVAGNHDVGFHYKMHPFFMSRFESYLNNSSVNLYTIKQIHFVVINSMAMEGDGCMFCTQAEDQLKNISRTLYCMKYPLEAECARTRRHPYSQPILLQHFPTYRISDTMCEEHDAPYIEAFRERFHVLSKDATDMLGELLKPRLAFAGHSHHFCHSVNRLGIDEYTVASFSWRNKVNPSFMLATITPDDYVVSKCKMLPQQFVFNSYLSAGILCLIVIGFQLRKCIQSRRQSSAVDHRKVNYLD</sequence>
<comment type="function">
    <text evidence="1">Metallophosphoesterase.</text>
</comment>
<comment type="cofactor">
    <cofactor evidence="1">
        <name>Mn(2+)</name>
        <dbReference type="ChEBI" id="CHEBI:29035"/>
    </cofactor>
    <text evidence="1">Binds 2 manganese ions per subunit.</text>
</comment>
<comment type="subcellular location">
    <subcellularLocation>
        <location evidence="3">Membrane</location>
        <topology evidence="3">Multi-pass membrane protein</topology>
    </subcellularLocation>
</comment>
<comment type="alternative products">
    <event type="alternative splicing"/>
    <isoform>
        <id>Q9VLR9-1</id>
        <name>1</name>
        <sequence type="displayed"/>
    </isoform>
    <isoform>
        <id>Q9VLR9-2</id>
        <name>2</name>
        <sequence type="described" ref="VSP_030687"/>
    </isoform>
</comment>
<comment type="similarity">
    <text evidence="3">Belongs to the metallophosphoesterase superfamily. MPPE1 family.</text>
</comment>
<feature type="chain" id="PRO_0000315735" description="Metallophosphoesterase 1 homolog">
    <location>
        <begin position="1"/>
        <end position="370"/>
    </location>
</feature>
<feature type="transmembrane region" description="Helical" evidence="2">
    <location>
        <begin position="7"/>
        <end position="27"/>
    </location>
</feature>
<feature type="transmembrane region" description="Helical" evidence="2">
    <location>
        <begin position="328"/>
        <end position="348"/>
    </location>
</feature>
<feature type="binding site" evidence="1">
    <location>
        <position position="52"/>
    </location>
    <ligand>
        <name>a divalent metal cation</name>
        <dbReference type="ChEBI" id="CHEBI:60240"/>
        <label>2</label>
    </ligand>
</feature>
<feature type="binding site" evidence="1">
    <location>
        <position position="94"/>
    </location>
    <ligand>
        <name>a divalent metal cation</name>
        <dbReference type="ChEBI" id="CHEBI:60240"/>
        <label>1</label>
    </ligand>
</feature>
<feature type="binding site" evidence="1">
    <location>
        <position position="94"/>
    </location>
    <ligand>
        <name>a divalent metal cation</name>
        <dbReference type="ChEBI" id="CHEBI:60240"/>
        <label>2</label>
    </ligand>
</feature>
<feature type="binding site" evidence="1">
    <location>
        <position position="132"/>
    </location>
    <ligand>
        <name>a divalent metal cation</name>
        <dbReference type="ChEBI" id="CHEBI:60240"/>
        <label>1</label>
    </ligand>
</feature>
<feature type="binding site" evidence="1">
    <location>
        <position position="225"/>
    </location>
    <ligand>
        <name>a divalent metal cation</name>
        <dbReference type="ChEBI" id="CHEBI:60240"/>
        <label>1</label>
    </ligand>
</feature>
<feature type="binding site" evidence="1">
    <location>
        <position position="275"/>
    </location>
    <ligand>
        <name>a divalent metal cation</name>
        <dbReference type="ChEBI" id="CHEBI:60240"/>
        <label>1</label>
    </ligand>
</feature>
<feature type="binding site" evidence="1">
    <location>
        <position position="277"/>
    </location>
    <ligand>
        <name>a divalent metal cation</name>
        <dbReference type="ChEBI" id="CHEBI:60240"/>
        <label>2</label>
    </ligand>
</feature>
<feature type="splice variant" id="VSP_030687" description="In isoform 2." evidence="3">
    <location>
        <begin position="368"/>
        <end position="370"/>
    </location>
</feature>
<name>MPPE1_DROME</name>
<keyword id="KW-0025">Alternative splicing</keyword>
<keyword id="KW-0378">Hydrolase</keyword>
<keyword id="KW-0464">Manganese</keyword>
<keyword id="KW-0472">Membrane</keyword>
<keyword id="KW-0479">Metal-binding</keyword>
<keyword id="KW-1185">Reference proteome</keyword>
<keyword id="KW-0812">Transmembrane</keyword>
<keyword id="KW-1133">Transmembrane helix</keyword>
<accession>Q9VLR9</accession>
<accession>M9PF55</accession>
<accession>Q8T3Q1</accession>